<comment type="function">
    <text evidence="1">NDH-1 shuttles electrons from NADH, via FMN and iron-sulfur (Fe-S) centers, to quinones in the respiratory chain. The immediate electron acceptor for the enzyme in this species is believed to be ubiquinone. Couples the redox reaction to proton translocation (for every two electrons transferred, four hydrogen ions are translocated across the cytoplasmic membrane), and thus conserves the redox energy in a proton gradient.</text>
</comment>
<comment type="catalytic activity">
    <reaction evidence="1">
        <text>a quinone + NADH + 5 H(+)(in) = a quinol + NAD(+) + 4 H(+)(out)</text>
        <dbReference type="Rhea" id="RHEA:57888"/>
        <dbReference type="ChEBI" id="CHEBI:15378"/>
        <dbReference type="ChEBI" id="CHEBI:24646"/>
        <dbReference type="ChEBI" id="CHEBI:57540"/>
        <dbReference type="ChEBI" id="CHEBI:57945"/>
        <dbReference type="ChEBI" id="CHEBI:132124"/>
    </reaction>
</comment>
<comment type="subunit">
    <text evidence="1">NDH-1 is composed of 14 different subunits. Subunits NuoB, C, D, E, F, and G constitute the peripheral sector of the complex.</text>
</comment>
<comment type="subcellular location">
    <subcellularLocation>
        <location evidence="1">Cell inner membrane</location>
        <topology evidence="1">Peripheral membrane protein</topology>
        <orientation evidence="1">Cytoplasmic side</orientation>
    </subcellularLocation>
</comment>
<comment type="similarity">
    <text evidence="1">Belongs to the complex I 49 kDa subunit family.</text>
</comment>
<evidence type="ECO:0000255" key="1">
    <source>
        <dbReference type="HAMAP-Rule" id="MF_01358"/>
    </source>
</evidence>
<sequence>MAETQVRNFNINFGPQHPAAHGVLRLVLELDGEVVERVDPHIGLLHRGTEKLMEAKTYLQAVPYLDRLDYVAPMNQEHAYALAVERLLDIEVPKRGQLIRVLYSEIGRILNHLLNVTTQAMDVGALTPPLWGFEEREKLMVFYERACGARMHAAYFRPGGVHQDLPDQLIEDIGKWIDPFFTTLKNLDDLITPNRIFKQRNVDIGVVKLEDAWAWGFSGVMVRGSGAAWDLRKSQPYECYSEMEFDIPVGKNGDCYDRYLIRMEEMRQSARIMRQCVDLLLGKERVGPVSNTDHKIVPPKRGEMKRSMEALIHHFKLYTEGYHVPAGEVYAAVEAPKGEFGVYLVSDGSNKPYRFKLRAPGFAHLQAMDFLCRGHMLADVSAILGSLDIVFGEVDR</sequence>
<reference key="1">
    <citation type="journal article" date="2008" name="PLoS ONE">
        <title>Genome sequence of Brucella abortus vaccine strain S19 compared to virulent strains yields candidate virulence genes.</title>
        <authorList>
            <person name="Crasta O.R."/>
            <person name="Folkerts O."/>
            <person name="Fei Z."/>
            <person name="Mane S.P."/>
            <person name="Evans C."/>
            <person name="Martino-Catt S."/>
            <person name="Bricker B."/>
            <person name="Yu G."/>
            <person name="Du L."/>
            <person name="Sobral B.W."/>
        </authorList>
    </citation>
    <scope>NUCLEOTIDE SEQUENCE [LARGE SCALE GENOMIC DNA]</scope>
    <source>
        <strain>S19</strain>
    </source>
</reference>
<keyword id="KW-0997">Cell inner membrane</keyword>
<keyword id="KW-1003">Cell membrane</keyword>
<keyword id="KW-0472">Membrane</keyword>
<keyword id="KW-0520">NAD</keyword>
<keyword id="KW-0874">Quinone</keyword>
<keyword id="KW-1278">Translocase</keyword>
<keyword id="KW-0813">Transport</keyword>
<keyword id="KW-0830">Ubiquinone</keyword>
<accession>B2S546</accession>
<proteinExistence type="inferred from homology"/>
<organism>
    <name type="scientific">Brucella abortus (strain S19)</name>
    <dbReference type="NCBI Taxonomy" id="430066"/>
    <lineage>
        <taxon>Bacteria</taxon>
        <taxon>Pseudomonadati</taxon>
        <taxon>Pseudomonadota</taxon>
        <taxon>Alphaproteobacteria</taxon>
        <taxon>Hyphomicrobiales</taxon>
        <taxon>Brucellaceae</taxon>
        <taxon>Brucella/Ochrobactrum group</taxon>
        <taxon>Brucella</taxon>
    </lineage>
</organism>
<dbReference type="EC" id="7.1.1.-" evidence="1"/>
<dbReference type="EMBL" id="CP000887">
    <property type="protein sequence ID" value="ACD72293.1"/>
    <property type="molecule type" value="Genomic_DNA"/>
</dbReference>
<dbReference type="RefSeq" id="WP_002966770.1">
    <property type="nucleotide sequence ID" value="NC_010742.1"/>
</dbReference>
<dbReference type="SMR" id="B2S546"/>
<dbReference type="KEGG" id="bmc:BAbS19_I07690"/>
<dbReference type="HOGENOM" id="CLU_015134_1_1_5"/>
<dbReference type="Proteomes" id="UP000002565">
    <property type="component" value="Chromosome 1"/>
</dbReference>
<dbReference type="GO" id="GO:0005886">
    <property type="term" value="C:plasma membrane"/>
    <property type="evidence" value="ECO:0007669"/>
    <property type="project" value="UniProtKB-SubCell"/>
</dbReference>
<dbReference type="GO" id="GO:0051287">
    <property type="term" value="F:NAD binding"/>
    <property type="evidence" value="ECO:0007669"/>
    <property type="project" value="InterPro"/>
</dbReference>
<dbReference type="GO" id="GO:0050136">
    <property type="term" value="F:NADH:ubiquinone reductase (non-electrogenic) activity"/>
    <property type="evidence" value="ECO:0007669"/>
    <property type="project" value="UniProtKB-UniRule"/>
</dbReference>
<dbReference type="GO" id="GO:0048038">
    <property type="term" value="F:quinone binding"/>
    <property type="evidence" value="ECO:0007669"/>
    <property type="project" value="UniProtKB-KW"/>
</dbReference>
<dbReference type="FunFam" id="1.10.645.10:FF:000005">
    <property type="entry name" value="NADH-quinone oxidoreductase subunit D"/>
    <property type="match status" value="1"/>
</dbReference>
<dbReference type="Gene3D" id="1.10.645.10">
    <property type="entry name" value="Cytochrome-c3 Hydrogenase, chain B"/>
    <property type="match status" value="1"/>
</dbReference>
<dbReference type="HAMAP" id="MF_01358">
    <property type="entry name" value="NDH1_NuoD"/>
    <property type="match status" value="1"/>
</dbReference>
<dbReference type="InterPro" id="IPR001135">
    <property type="entry name" value="NADH_Q_OxRdtase_suD"/>
</dbReference>
<dbReference type="InterPro" id="IPR014029">
    <property type="entry name" value="NADH_UbQ_OxRdtase_49kDa_CS"/>
</dbReference>
<dbReference type="InterPro" id="IPR022885">
    <property type="entry name" value="NDH1_su_D/H"/>
</dbReference>
<dbReference type="InterPro" id="IPR029014">
    <property type="entry name" value="NiFe-Hase_large"/>
</dbReference>
<dbReference type="NCBIfam" id="TIGR01962">
    <property type="entry name" value="NuoD"/>
    <property type="match status" value="1"/>
</dbReference>
<dbReference type="NCBIfam" id="NF004739">
    <property type="entry name" value="PRK06075.1"/>
    <property type="match status" value="1"/>
</dbReference>
<dbReference type="PANTHER" id="PTHR11993:SF10">
    <property type="entry name" value="NADH DEHYDROGENASE [UBIQUINONE] IRON-SULFUR PROTEIN 2, MITOCHONDRIAL"/>
    <property type="match status" value="1"/>
</dbReference>
<dbReference type="PANTHER" id="PTHR11993">
    <property type="entry name" value="NADH-UBIQUINONE OXIDOREDUCTASE 49 KDA SUBUNIT"/>
    <property type="match status" value="1"/>
</dbReference>
<dbReference type="Pfam" id="PF00346">
    <property type="entry name" value="Complex1_49kDa"/>
    <property type="match status" value="1"/>
</dbReference>
<dbReference type="SUPFAM" id="SSF56762">
    <property type="entry name" value="HydB/Nqo4-like"/>
    <property type="match status" value="1"/>
</dbReference>
<dbReference type="PROSITE" id="PS00535">
    <property type="entry name" value="COMPLEX1_49K"/>
    <property type="match status" value="1"/>
</dbReference>
<feature type="chain" id="PRO_0000357784" description="NADH-quinone oxidoreductase subunit D">
    <location>
        <begin position="1"/>
        <end position="396"/>
    </location>
</feature>
<protein>
    <recommendedName>
        <fullName evidence="1">NADH-quinone oxidoreductase subunit D</fullName>
        <ecNumber evidence="1">7.1.1.-</ecNumber>
    </recommendedName>
    <alternativeName>
        <fullName evidence="1">NADH dehydrogenase I subunit D</fullName>
    </alternativeName>
    <alternativeName>
        <fullName evidence="1">NDH-1 subunit D</fullName>
    </alternativeName>
</protein>
<gene>
    <name evidence="1" type="primary">nuoD</name>
    <name type="ordered locus">BAbS19_I07690</name>
</gene>
<name>NUOD_BRUA1</name>